<proteinExistence type="evidence at protein level"/>
<gene>
    <name evidence="7 13" type="primary">slc15a2</name>
</gene>
<evidence type="ECO:0000250" key="1">
    <source>
        <dbReference type="UniProtKB" id="Q16348"/>
    </source>
</evidence>
<evidence type="ECO:0000250" key="2">
    <source>
        <dbReference type="UniProtKB" id="Q63424"/>
    </source>
</evidence>
<evidence type="ECO:0000255" key="3"/>
<evidence type="ECO:0000255" key="4">
    <source>
        <dbReference type="PROSITE-ProRule" id="PRU00498"/>
    </source>
</evidence>
<evidence type="ECO:0000256" key="5">
    <source>
        <dbReference type="SAM" id="MobiDB-lite"/>
    </source>
</evidence>
<evidence type="ECO:0000269" key="6">
    <source>
    </source>
</evidence>
<evidence type="ECO:0000303" key="7">
    <source>
    </source>
</evidence>
<evidence type="ECO:0000305" key="8"/>
<evidence type="ECO:0000305" key="9">
    <source>
    </source>
</evidence>
<evidence type="ECO:0000312" key="10">
    <source>
        <dbReference type="EMBL" id="AAI24582.1"/>
    </source>
</evidence>
<evidence type="ECO:0000312" key="11">
    <source>
        <dbReference type="EMBL" id="ABA86557.1"/>
    </source>
</evidence>
<evidence type="ECO:0000312" key="12">
    <source>
        <dbReference type="Proteomes" id="UP000000437"/>
    </source>
</evidence>
<evidence type="ECO:0000312" key="13">
    <source>
        <dbReference type="ZFIN" id="ZDB-GENE-030131-5866"/>
    </source>
</evidence>
<feature type="chain" id="PRO_0000444319" description="Solute carrier family 15 member 2">
    <location>
        <begin position="1"/>
        <end position="719"/>
    </location>
</feature>
<feature type="topological domain" description="Cytoplasmic" evidence="8">
    <location>
        <begin position="1"/>
        <end position="43"/>
    </location>
</feature>
<feature type="transmembrane region" description="Helical" evidence="3">
    <location>
        <begin position="44"/>
        <end position="61"/>
    </location>
</feature>
<feature type="topological domain" description="Extracellular" evidence="8">
    <location>
        <begin position="62"/>
        <end position="69"/>
    </location>
</feature>
<feature type="transmembrane region" description="Helical" evidence="3">
    <location>
        <begin position="70"/>
        <end position="90"/>
    </location>
</feature>
<feature type="topological domain" description="Cytoplasmic" evidence="8">
    <location>
        <begin position="91"/>
        <end position="99"/>
    </location>
</feature>
<feature type="transmembrane region" description="Helical" evidence="3">
    <location>
        <begin position="100"/>
        <end position="120"/>
    </location>
</feature>
<feature type="topological domain" description="Extracellular" evidence="8">
    <location>
        <begin position="121"/>
        <end position="125"/>
    </location>
</feature>
<feature type="transmembrane region" description="Helical" evidence="3">
    <location>
        <begin position="126"/>
        <end position="146"/>
    </location>
</feature>
<feature type="topological domain" description="Cytoplasmic" evidence="8">
    <location>
        <begin position="147"/>
        <end position="169"/>
    </location>
</feature>
<feature type="transmembrane region" description="Helical" evidence="3">
    <location>
        <begin position="170"/>
        <end position="190"/>
    </location>
</feature>
<feature type="topological domain" description="Extracellular" evidence="8">
    <location>
        <begin position="191"/>
        <end position="201"/>
    </location>
</feature>
<feature type="transmembrane region" description="Helical" evidence="3">
    <location>
        <begin position="202"/>
        <end position="222"/>
    </location>
</feature>
<feature type="topological domain" description="Cytoplasmic" evidence="8">
    <location>
        <begin position="223"/>
        <end position="280"/>
    </location>
</feature>
<feature type="transmembrane region" description="Helical" evidence="3">
    <location>
        <begin position="281"/>
        <end position="301"/>
    </location>
</feature>
<feature type="topological domain" description="Extracellular" evidence="8">
    <location>
        <begin position="302"/>
        <end position="334"/>
    </location>
</feature>
<feature type="transmembrane region" description="Helical" evidence="3">
    <location>
        <begin position="335"/>
        <end position="355"/>
    </location>
</feature>
<feature type="topological domain" description="Cytoplasmic" evidence="8">
    <location>
        <begin position="356"/>
        <end position="367"/>
    </location>
</feature>
<feature type="transmembrane region" description="Helical" evidence="3">
    <location>
        <begin position="368"/>
        <end position="388"/>
    </location>
</feature>
<feature type="topological domain" description="Extracellular" evidence="8">
    <location>
        <begin position="389"/>
        <end position="594"/>
    </location>
</feature>
<feature type="transmembrane region" description="Helical" evidence="3">
    <location>
        <begin position="595"/>
        <end position="615"/>
    </location>
</feature>
<feature type="topological domain" description="Cytoplasmic" evidence="8">
    <location>
        <begin position="616"/>
        <end position="626"/>
    </location>
</feature>
<feature type="transmembrane region" description="Helical" evidence="3">
    <location>
        <begin position="627"/>
        <end position="647"/>
    </location>
</feature>
<feature type="topological domain" description="Extracellular" evidence="8">
    <location>
        <begin position="648"/>
        <end position="657"/>
    </location>
</feature>
<feature type="transmembrane region" description="Helical" evidence="3">
    <location>
        <begin position="658"/>
        <end position="678"/>
    </location>
</feature>
<feature type="topological domain" description="Cytoplasmic" evidence="8">
    <location>
        <begin position="679"/>
        <end position="719"/>
    </location>
</feature>
<feature type="region of interest" description="Extracellular domain (ECD)" evidence="2">
    <location>
        <begin position="389"/>
        <end position="594"/>
    </location>
</feature>
<feature type="region of interest" description="Disordered" evidence="5">
    <location>
        <begin position="695"/>
        <end position="719"/>
    </location>
</feature>
<feature type="compositionally biased region" description="Basic and acidic residues" evidence="5">
    <location>
        <begin position="695"/>
        <end position="708"/>
    </location>
</feature>
<feature type="glycosylation site" description="N-linked (GlcNAc...) asparagine" evidence="4">
    <location>
        <position position="66"/>
    </location>
</feature>
<feature type="glycosylation site" description="N-linked (GlcNAc...) asparagine" evidence="4">
    <location>
        <position position="481"/>
    </location>
</feature>
<feature type="glycosylation site" description="N-linked (GlcNAc...) asparagine" evidence="4">
    <location>
        <position position="513"/>
    </location>
</feature>
<feature type="glycosylation site" description="N-linked (GlcNAc...) asparagine" evidence="4">
    <location>
        <position position="532"/>
    </location>
</feature>
<feature type="splice variant" id="VSP_059583" description="In isoform 2.">
    <location>
        <begin position="280"/>
        <end position="304"/>
    </location>
</feature>
<feature type="sequence conflict" description="In Ref. 1; ABA86557 and 3; AAI24582/AAI65646." evidence="8" ref="1 3">
    <original>MNYQ</original>
    <variation>VNYE</variation>
    <location>
        <begin position="456"/>
        <end position="459"/>
    </location>
</feature>
<feature type="sequence conflict" description="In Ref. 1; ABA86557 and 3; AAI24582/AAI65646." evidence="8" ref="1 3">
    <original>TAQHN</original>
    <variation>PAQSG</variation>
    <location>
        <begin position="477"/>
        <end position="481"/>
    </location>
</feature>
<feature type="sequence conflict" description="In Ref. 1; ABA86557 and 3; AAI24582/AAI65646." evidence="8" ref="1 3">
    <original>T</original>
    <variation>S</variation>
    <location>
        <position position="549"/>
    </location>
</feature>
<feature type="sequence conflict" description="In Ref. 1; ABA86557 and 3; AAI24582/AAI65646." evidence="8" ref="1 3">
    <original>A</original>
    <variation>T</variation>
    <location>
        <position position="572"/>
    </location>
</feature>
<feature type="sequence conflict" description="In Ref. 1; ABA86557 and 3; AAI24582/AAI65646." evidence="8" ref="1 3">
    <original>V</original>
    <variation>I</variation>
    <location>
        <position position="578"/>
    </location>
</feature>
<feature type="sequence conflict" description="In Ref. 1; ABA86557 and 3; AAI24582/AAI65646." evidence="8" ref="1 3">
    <original>D</original>
    <variation>E</variation>
    <location>
        <position position="694"/>
    </location>
</feature>
<feature type="sequence conflict" description="In Ref. 1; ABA86557 and 3; AAI24582/AAI65646." evidence="8" ref="1 3">
    <original>DM</original>
    <variation>EI</variation>
    <location>
        <begin position="712"/>
        <end position="713"/>
    </location>
</feature>
<dbReference type="EMBL" id="DQ192597">
    <property type="protein sequence ID" value="ABA86557.1"/>
    <property type="molecule type" value="mRNA"/>
</dbReference>
<dbReference type="EMBL" id="BX548071">
    <property type="status" value="NOT_ANNOTATED_CDS"/>
    <property type="molecule type" value="Genomic_DNA"/>
</dbReference>
<dbReference type="EMBL" id="BC124581">
    <property type="protein sequence ID" value="AAI24582.1"/>
    <property type="molecule type" value="mRNA"/>
</dbReference>
<dbReference type="EMBL" id="BC165646">
    <property type="protein sequence ID" value="AAI65646.1"/>
    <property type="molecule type" value="mRNA"/>
</dbReference>
<dbReference type="RefSeq" id="NP_001034917.1">
    <property type="nucleotide sequence ID" value="NM_001039828.1"/>
</dbReference>
<dbReference type="SMR" id="B0S6T2"/>
<dbReference type="FunCoup" id="B0S6T2">
    <property type="interactions" value="445"/>
</dbReference>
<dbReference type="STRING" id="7955.ENSDARP00000091395"/>
<dbReference type="TCDB" id="2.A.17.4.5">
    <property type="family name" value="the proton-dependent oligopeptide transporter (pot/ptr) family"/>
</dbReference>
<dbReference type="GlyCosmos" id="B0S6T2">
    <property type="glycosylation" value="4 sites, No reported glycans"/>
</dbReference>
<dbReference type="PaxDb" id="7955-ENSDARP00000091395"/>
<dbReference type="Ensembl" id="ENSDART00000100622">
    <molecule id="B0S6T2-1"/>
    <property type="protein sequence ID" value="ENSDARP00000091395"/>
    <property type="gene ID" value="ENSDARG00000032010"/>
</dbReference>
<dbReference type="GeneID" id="556684"/>
<dbReference type="KEGG" id="dre:556684"/>
<dbReference type="AGR" id="ZFIN:ZDB-GENE-030131-5866"/>
<dbReference type="CTD" id="6565"/>
<dbReference type="ZFIN" id="ZDB-GENE-030131-5866">
    <property type="gene designation" value="slc15a2"/>
</dbReference>
<dbReference type="eggNOG" id="KOG1237">
    <property type="taxonomic scope" value="Eukaryota"/>
</dbReference>
<dbReference type="HOGENOM" id="CLU_004790_3_0_1"/>
<dbReference type="InParanoid" id="B0S6T2"/>
<dbReference type="OMA" id="AFKGWRK"/>
<dbReference type="OrthoDB" id="205993at2759"/>
<dbReference type="PhylomeDB" id="B0S6T2"/>
<dbReference type="TreeFam" id="TF330897"/>
<dbReference type="PRO" id="PR:B0S6T2"/>
<dbReference type="Proteomes" id="UP000000437">
    <property type="component" value="Chromosome 9"/>
</dbReference>
<dbReference type="Bgee" id="ENSDARG00000032010">
    <property type="expression patterns" value="Expressed in intestine and 24 other cell types or tissues"/>
</dbReference>
<dbReference type="ExpressionAtlas" id="B0S6T2">
    <property type="expression patterns" value="baseline and differential"/>
</dbReference>
<dbReference type="GO" id="GO:0016324">
    <property type="term" value="C:apical plasma membrane"/>
    <property type="evidence" value="ECO:0000250"/>
    <property type="project" value="UniProtKB"/>
</dbReference>
<dbReference type="GO" id="GO:0030670">
    <property type="term" value="C:phagocytic vesicle membrane"/>
    <property type="evidence" value="ECO:0007669"/>
    <property type="project" value="UniProtKB-SubCell"/>
</dbReference>
<dbReference type="GO" id="GO:0005886">
    <property type="term" value="C:plasma membrane"/>
    <property type="evidence" value="ECO:0000250"/>
    <property type="project" value="UniProtKB"/>
</dbReference>
<dbReference type="GO" id="GO:0071916">
    <property type="term" value="F:dipeptide transmembrane transporter activity"/>
    <property type="evidence" value="ECO:0000314"/>
    <property type="project" value="ZFIN"/>
</dbReference>
<dbReference type="GO" id="GO:0015333">
    <property type="term" value="F:peptide:proton symporter activity"/>
    <property type="evidence" value="ECO:0000250"/>
    <property type="project" value="UniProtKB"/>
</dbReference>
<dbReference type="GO" id="GO:0042937">
    <property type="term" value="F:tripeptide transmembrane transporter activity"/>
    <property type="evidence" value="ECO:0000250"/>
    <property type="project" value="UniProtKB"/>
</dbReference>
<dbReference type="GO" id="GO:0140206">
    <property type="term" value="P:dipeptide import across plasma membrane"/>
    <property type="evidence" value="ECO:0000250"/>
    <property type="project" value="UniProtKB"/>
</dbReference>
<dbReference type="GO" id="GO:0045087">
    <property type="term" value="P:innate immune response"/>
    <property type="evidence" value="ECO:0007669"/>
    <property type="project" value="UniProtKB-KW"/>
</dbReference>
<dbReference type="GO" id="GO:0015835">
    <property type="term" value="P:peptidoglycan transport"/>
    <property type="evidence" value="ECO:0000250"/>
    <property type="project" value="UniProtKB"/>
</dbReference>
<dbReference type="GO" id="GO:0015031">
    <property type="term" value="P:protein transport"/>
    <property type="evidence" value="ECO:0007669"/>
    <property type="project" value="UniProtKB-KW"/>
</dbReference>
<dbReference type="GO" id="GO:0070424">
    <property type="term" value="P:regulation of nucleotide-binding domain, leucine rich repeat containing receptor signaling pathway"/>
    <property type="evidence" value="ECO:0000250"/>
    <property type="project" value="UniProtKB"/>
</dbReference>
<dbReference type="GO" id="GO:0001878">
    <property type="term" value="P:response to yeast"/>
    <property type="evidence" value="ECO:0000314"/>
    <property type="project" value="ZFIN"/>
</dbReference>
<dbReference type="GO" id="GO:0140207">
    <property type="term" value="P:tripeptide import across plasma membrane"/>
    <property type="evidence" value="ECO:0000250"/>
    <property type="project" value="UniProtKB"/>
</dbReference>
<dbReference type="CDD" id="cd17347">
    <property type="entry name" value="MFS_SLC15A1_2_like"/>
    <property type="match status" value="1"/>
</dbReference>
<dbReference type="FunFam" id="1.20.1250.20:FF:000049">
    <property type="entry name" value="Solute carrier family 15 member 2"/>
    <property type="match status" value="1"/>
</dbReference>
<dbReference type="Gene3D" id="1.20.1250.20">
    <property type="entry name" value="MFS general substrate transporter like domains"/>
    <property type="match status" value="2"/>
</dbReference>
<dbReference type="InterPro" id="IPR036259">
    <property type="entry name" value="MFS_trans_sf"/>
</dbReference>
<dbReference type="InterPro" id="IPR000109">
    <property type="entry name" value="POT_fam"/>
</dbReference>
<dbReference type="InterPro" id="IPR018456">
    <property type="entry name" value="PTR2_symporter_CS"/>
</dbReference>
<dbReference type="PANTHER" id="PTHR11654">
    <property type="entry name" value="OLIGOPEPTIDE TRANSPORTER-RELATED"/>
    <property type="match status" value="1"/>
</dbReference>
<dbReference type="Pfam" id="PF00854">
    <property type="entry name" value="PTR2"/>
    <property type="match status" value="2"/>
</dbReference>
<dbReference type="SUPFAM" id="SSF103473">
    <property type="entry name" value="MFS general substrate transporter"/>
    <property type="match status" value="1"/>
</dbReference>
<dbReference type="PROSITE" id="PS01022">
    <property type="entry name" value="PTR2_1"/>
    <property type="match status" value="1"/>
</dbReference>
<organism evidence="12">
    <name type="scientific">Danio rerio</name>
    <name type="common">Zebrafish</name>
    <name type="synonym">Brachydanio rerio</name>
    <dbReference type="NCBI Taxonomy" id="7955"/>
    <lineage>
        <taxon>Eukaryota</taxon>
        <taxon>Metazoa</taxon>
        <taxon>Chordata</taxon>
        <taxon>Craniata</taxon>
        <taxon>Vertebrata</taxon>
        <taxon>Euteleostomi</taxon>
        <taxon>Actinopterygii</taxon>
        <taxon>Neopterygii</taxon>
        <taxon>Teleostei</taxon>
        <taxon>Ostariophysi</taxon>
        <taxon>Cypriniformes</taxon>
        <taxon>Danionidae</taxon>
        <taxon>Danioninae</taxon>
        <taxon>Danio</taxon>
    </lineage>
</organism>
<keyword id="KW-0025">Alternative splicing</keyword>
<keyword id="KW-1003">Cell membrane</keyword>
<keyword id="KW-0968">Cytoplasmic vesicle</keyword>
<keyword id="KW-0325">Glycoprotein</keyword>
<keyword id="KW-0391">Immunity</keyword>
<keyword id="KW-0399">Innate immunity</keyword>
<keyword id="KW-0472">Membrane</keyword>
<keyword id="KW-0571">Peptide transport</keyword>
<keyword id="KW-0653">Protein transport</keyword>
<keyword id="KW-1185">Reference proteome</keyword>
<keyword id="KW-0769">Symport</keyword>
<keyword id="KW-0812">Transmembrane</keyword>
<keyword id="KW-1133">Transmembrane helix</keyword>
<keyword id="KW-0813">Transport</keyword>
<protein>
    <recommendedName>
        <fullName evidence="7">Solute carrier family 15 member 2</fullName>
    </recommendedName>
    <alternativeName>
        <fullName evidence="7">Peptide transporter 2</fullName>
        <shortName evidence="7">PEPT2</shortName>
    </alternativeName>
</protein>
<sequence length="719" mass="79690">MGKMKDKDVDAEKYEKAQRSPKLCGTNYPVSIAFIVVNEFCERFSYYGMKAVLTLYFMNYLHWDKNLSTAIYHAFSGLCYFTPLLGALIADSWLGKFKTIIYLSIVYVIGHVVKSVGAIPDVGDSTVHIALSMVGLGLIALGTGGIKPCVAAFGGDQFDEDNIDERRKFFSIFYMSINAGSVLSTIITPILRGDVQCFGGDCYALAFGVPAALMVIALVVFISGSGLYKKSPPEGNVLVRVCKCIGFAISNRWTNSKKSPKRSHWLDWAEEKYSKRLIQEIKMVCRVLVLYIPLPMFWALFDQQGSRWTLQATRMNMDFGGGFIIKPDQMQMLNALLILVFIPIFDMGIYPLVGLCRIKLTPLKKMATGMILAALAFCAATAVEVYVIKTVVEPPPAKESLVQVYNLMDSDVTVQFPAHNVFSEPLKPYEEPSGYSSLPLTGESQLQNVVVSHNGMNYQCRLTFTERMAYSLLLHPTAQHNGSVCNLVKDHITKSETGAAYIRFINTHTENINVTVGTEEVHASANYGISRNISVPRGEYNKAVCVTDTKEYEINLGLLDFGAFYTVILSEAGNNLAVKKMEDIQANNIHIGWQIPQYVFLTAGEVMFSITGLEFSYSQAPASMKSVLQAGWLMTVAFGNVIVLIVAEGAGMEQWVEFLLFAALLVAVSIIFSIMAYFYTYVDPDQLDKLFKEDGDGGKVESSKKDELSLGDMPKQTKM</sequence>
<name>S15A2_DANRE</name>
<accession>B0S6T2</accession>
<accession>Q08BT0</accession>
<accession>Q2F800</accession>
<reference evidence="11" key="1">
    <citation type="journal article" date="2006" name="Physiol. Genomics">
        <title>High-affinity peptide transporter PEPT2 (SLC15A2) of the zebrafish Danio rerio: functional properties, genomic organization, and expression analysis.</title>
        <authorList>
            <person name="Romano A."/>
            <person name="Kottra G."/>
            <person name="Barca A."/>
            <person name="Tiso N."/>
            <person name="Maffia M."/>
            <person name="Argenton F."/>
            <person name="Daniel H."/>
            <person name="Storelli C."/>
            <person name="Verri T."/>
        </authorList>
    </citation>
    <scope>NUCLEOTIDE SEQUENCE [MRNA] (ISOFORM 1)</scope>
    <scope>FUNCTION</scope>
    <scope>TRANSPORTER ACTIVITY</scope>
    <scope>BIOPHYSICOCHEMICAL PROPERTIES</scope>
    <scope>SUBCELLULAR LOCATION</scope>
    <scope>TISSUE SPECIFICITY</scope>
    <scope>DEVELOPMENTAL STAGE</scope>
</reference>
<reference evidence="12" key="2">
    <citation type="journal article" date="2013" name="Nature">
        <title>The zebrafish reference genome sequence and its relationship to the human genome.</title>
        <authorList>
            <person name="Howe K."/>
            <person name="Clark M.D."/>
            <person name="Torroja C.F."/>
            <person name="Torrance J."/>
            <person name="Berthelot C."/>
            <person name="Muffato M."/>
            <person name="Collins J.E."/>
            <person name="Humphray S."/>
            <person name="McLaren K."/>
            <person name="Matthews L."/>
            <person name="McLaren S."/>
            <person name="Sealy I."/>
            <person name="Caccamo M."/>
            <person name="Churcher C."/>
            <person name="Scott C."/>
            <person name="Barrett J.C."/>
            <person name="Koch R."/>
            <person name="Rauch G.J."/>
            <person name="White S."/>
            <person name="Chow W."/>
            <person name="Kilian B."/>
            <person name="Quintais L.T."/>
            <person name="Guerra-Assuncao J.A."/>
            <person name="Zhou Y."/>
            <person name="Gu Y."/>
            <person name="Yen J."/>
            <person name="Vogel J.H."/>
            <person name="Eyre T."/>
            <person name="Redmond S."/>
            <person name="Banerjee R."/>
            <person name="Chi J."/>
            <person name="Fu B."/>
            <person name="Langley E."/>
            <person name="Maguire S.F."/>
            <person name="Laird G.K."/>
            <person name="Lloyd D."/>
            <person name="Kenyon E."/>
            <person name="Donaldson S."/>
            <person name="Sehra H."/>
            <person name="Almeida-King J."/>
            <person name="Loveland J."/>
            <person name="Trevanion S."/>
            <person name="Jones M."/>
            <person name="Quail M."/>
            <person name="Willey D."/>
            <person name="Hunt A."/>
            <person name="Burton J."/>
            <person name="Sims S."/>
            <person name="McLay K."/>
            <person name="Plumb B."/>
            <person name="Davis J."/>
            <person name="Clee C."/>
            <person name="Oliver K."/>
            <person name="Clark R."/>
            <person name="Riddle C."/>
            <person name="Elliot D."/>
            <person name="Threadgold G."/>
            <person name="Harden G."/>
            <person name="Ware D."/>
            <person name="Begum S."/>
            <person name="Mortimore B."/>
            <person name="Kerry G."/>
            <person name="Heath P."/>
            <person name="Phillimore B."/>
            <person name="Tracey A."/>
            <person name="Corby N."/>
            <person name="Dunn M."/>
            <person name="Johnson C."/>
            <person name="Wood J."/>
            <person name="Clark S."/>
            <person name="Pelan S."/>
            <person name="Griffiths G."/>
            <person name="Smith M."/>
            <person name="Glithero R."/>
            <person name="Howden P."/>
            <person name="Barker N."/>
            <person name="Lloyd C."/>
            <person name="Stevens C."/>
            <person name="Harley J."/>
            <person name="Holt K."/>
            <person name="Panagiotidis G."/>
            <person name="Lovell J."/>
            <person name="Beasley H."/>
            <person name="Henderson C."/>
            <person name="Gordon D."/>
            <person name="Auger K."/>
            <person name="Wright D."/>
            <person name="Collins J."/>
            <person name="Raisen C."/>
            <person name="Dyer L."/>
            <person name="Leung K."/>
            <person name="Robertson L."/>
            <person name="Ambridge K."/>
            <person name="Leongamornlert D."/>
            <person name="McGuire S."/>
            <person name="Gilderthorp R."/>
            <person name="Griffiths C."/>
            <person name="Manthravadi D."/>
            <person name="Nichol S."/>
            <person name="Barker G."/>
            <person name="Whitehead S."/>
            <person name="Kay M."/>
            <person name="Brown J."/>
            <person name="Murnane C."/>
            <person name="Gray E."/>
            <person name="Humphries M."/>
            <person name="Sycamore N."/>
            <person name="Barker D."/>
            <person name="Saunders D."/>
            <person name="Wallis J."/>
            <person name="Babbage A."/>
            <person name="Hammond S."/>
            <person name="Mashreghi-Mohammadi M."/>
            <person name="Barr L."/>
            <person name="Martin S."/>
            <person name="Wray P."/>
            <person name="Ellington A."/>
            <person name="Matthews N."/>
            <person name="Ellwood M."/>
            <person name="Woodmansey R."/>
            <person name="Clark G."/>
            <person name="Cooper J."/>
            <person name="Tromans A."/>
            <person name="Grafham D."/>
            <person name="Skuce C."/>
            <person name="Pandian R."/>
            <person name="Andrews R."/>
            <person name="Harrison E."/>
            <person name="Kimberley A."/>
            <person name="Garnett J."/>
            <person name="Fosker N."/>
            <person name="Hall R."/>
            <person name="Garner P."/>
            <person name="Kelly D."/>
            <person name="Bird C."/>
            <person name="Palmer S."/>
            <person name="Gehring I."/>
            <person name="Berger A."/>
            <person name="Dooley C.M."/>
            <person name="Ersan-Urun Z."/>
            <person name="Eser C."/>
            <person name="Geiger H."/>
            <person name="Geisler M."/>
            <person name="Karotki L."/>
            <person name="Kirn A."/>
            <person name="Konantz J."/>
            <person name="Konantz M."/>
            <person name="Oberlander M."/>
            <person name="Rudolph-Geiger S."/>
            <person name="Teucke M."/>
            <person name="Lanz C."/>
            <person name="Raddatz G."/>
            <person name="Osoegawa K."/>
            <person name="Zhu B."/>
            <person name="Rapp A."/>
            <person name="Widaa S."/>
            <person name="Langford C."/>
            <person name="Yang F."/>
            <person name="Schuster S.C."/>
            <person name="Carter N.P."/>
            <person name="Harrow J."/>
            <person name="Ning Z."/>
            <person name="Herrero J."/>
            <person name="Searle S.M."/>
            <person name="Enright A."/>
            <person name="Geisler R."/>
            <person name="Plasterk R.H."/>
            <person name="Lee C."/>
            <person name="Westerfield M."/>
            <person name="de Jong P.J."/>
            <person name="Zon L.I."/>
            <person name="Postlethwait J.H."/>
            <person name="Nusslein-Volhard C."/>
            <person name="Hubbard T.J."/>
            <person name="Roest Crollius H."/>
            <person name="Rogers J."/>
            <person name="Stemple D.L."/>
        </authorList>
    </citation>
    <scope>NUCLEOTIDE SEQUENCE [LARGE SCALE GENOMIC DNA]</scope>
    <source>
        <strain>Tuebingen</strain>
    </source>
</reference>
<reference evidence="10" key="3">
    <citation type="submission" date="2008-04" db="EMBL/GenBank/DDBJ databases">
        <authorList>
            <consortium name="NIH - Zebrafish Gene Collection (ZGC) project"/>
        </authorList>
    </citation>
    <scope>NUCLEOTIDE SEQUENCE [LARGE SCALE MRNA] (ISOFORM 2)</scope>
    <source>
        <strain evidence="10">AB</strain>
    </source>
</reference>
<comment type="function">
    <text evidence="2 6">Proton-coupled amino-acid transporter that transports oligopeptides of 2 to 4 amino acids with a preference for dipeptides (PubMed:16317081). Transports neutral and anionic dipeptides with a proton to peptide stoichiometry of 2:1 or 3:1 (By similarity).</text>
</comment>
<comment type="catalytic activity">
    <reaction evidence="6">
        <text>a dipeptide(out) + 2 H(+)(out) = a dipeptide(in) + 2 H(+)(in)</text>
        <dbReference type="Rhea" id="RHEA:76179"/>
        <dbReference type="ChEBI" id="CHEBI:15378"/>
        <dbReference type="ChEBI" id="CHEBI:90799"/>
    </reaction>
    <physiologicalReaction direction="left-to-right" evidence="6">
        <dbReference type="Rhea" id="RHEA:76180"/>
    </physiologicalReaction>
</comment>
<comment type="catalytic activity">
    <reaction evidence="1">
        <text>N-acetyl-D-muramoyl-L-alanyl-D-isoglutamine(out) + 3 H(+)(out) = N-acetyl-D-muramoyl-L-alanyl-D-isoglutamine(in) + 3 H(+)(in)</text>
        <dbReference type="Rhea" id="RHEA:76375"/>
        <dbReference type="ChEBI" id="CHEBI:15378"/>
        <dbReference type="ChEBI" id="CHEBI:155830"/>
    </reaction>
    <physiologicalReaction direction="left-to-right" evidence="1">
        <dbReference type="Rhea" id="RHEA:76376"/>
    </physiologicalReaction>
</comment>
<comment type="catalytic activity">
    <reaction evidence="2">
        <text>glycyl-L-leucine(out) + 2 H(+)(out) = glycyl-L-leucine(in) + 2 H(+)(in)</text>
        <dbReference type="Rhea" id="RHEA:76167"/>
        <dbReference type="ChEBI" id="CHEBI:15378"/>
        <dbReference type="ChEBI" id="CHEBI:143163"/>
    </reaction>
    <physiologicalReaction direction="left-to-right" evidence="2">
        <dbReference type="Rhea" id="RHEA:76168"/>
    </physiologicalReaction>
</comment>
<comment type="catalytic activity">
    <reaction evidence="2">
        <text>glycyl-L-lysine(out) + 2 H(+)(out) = glycyl-L-lysine(in) + 2 H(+)(in)</text>
        <dbReference type="Rhea" id="RHEA:76171"/>
        <dbReference type="ChEBI" id="CHEBI:15378"/>
        <dbReference type="ChEBI" id="CHEBI:194323"/>
    </reaction>
    <physiologicalReaction direction="left-to-right" evidence="2">
        <dbReference type="Rhea" id="RHEA:76172"/>
    </physiologicalReaction>
</comment>
<comment type="catalytic activity">
    <reaction evidence="2">
        <text>glycyl-L-glutamate(out) + 3 H(+)(out) = glycyl-L-glutamate(in) + 3 H(+)(in)</text>
        <dbReference type="Rhea" id="RHEA:76175"/>
        <dbReference type="ChEBI" id="CHEBI:15378"/>
        <dbReference type="ChEBI" id="CHEBI:73784"/>
    </reaction>
    <physiologicalReaction direction="left-to-right" evidence="2">
        <dbReference type="Rhea" id="RHEA:76176"/>
    </physiologicalReaction>
</comment>
<comment type="catalytic activity">
    <reaction evidence="2">
        <text>L-alanyl-L-alanine(out) + 2 H(+)(out) = L-alanyl-L-alanine(in) + 2 H(+)(in)</text>
        <dbReference type="Rhea" id="RHEA:76183"/>
        <dbReference type="ChEBI" id="CHEBI:15378"/>
        <dbReference type="ChEBI" id="CHEBI:195181"/>
    </reaction>
    <physiologicalReaction direction="left-to-right" evidence="2">
        <dbReference type="Rhea" id="RHEA:76184"/>
    </physiologicalReaction>
</comment>
<comment type="catalytic activity">
    <reaction evidence="2">
        <text>an L-amino acid tripeptide(out) + 2 H(+)(out) = an L-amino acid tripeptide(in) + 2 H(+)(in)</text>
        <dbReference type="Rhea" id="RHEA:76187"/>
        <dbReference type="ChEBI" id="CHEBI:15378"/>
        <dbReference type="ChEBI" id="CHEBI:155837"/>
    </reaction>
    <physiologicalReaction direction="left-to-right" evidence="2">
        <dbReference type="Rhea" id="RHEA:76188"/>
    </physiologicalReaction>
</comment>
<comment type="catalytic activity">
    <reaction evidence="1">
        <text>carnosine(out) + 2 H(+)(out) = carnosine(in) + 2 H(+)(in)</text>
        <dbReference type="Rhea" id="RHEA:76191"/>
        <dbReference type="ChEBI" id="CHEBI:15378"/>
        <dbReference type="ChEBI" id="CHEBI:57485"/>
    </reaction>
    <physiologicalReaction direction="left-to-right" evidence="1">
        <dbReference type="Rhea" id="RHEA:76192"/>
    </physiologicalReaction>
</comment>
<comment type="biophysicochemical properties">
    <kinetics>
        <KM evidence="6">97 uM for Gly-L-Gln (at pH 5.5 and -160 mV)</KM>
        <KM evidence="6">79 uM for Gly-L-Gln (at pH 6.5 and -160 mV)</KM>
        <KM evidence="6">48 uM for Gly-L-Gln (at pH 7.5 and -160 mV)</KM>
        <KM evidence="6">163 uM for Gly-L-Gln (at pH 8.5 and -160 mV)</KM>
        <KM evidence="6">82 uM for Gly-L-Gln (at pH 5.5 and -120 mV)</KM>
        <KM evidence="6">38 uM for Gly-L-Gln (at pH 6.5 and -120 mV)</KM>
        <KM evidence="6">18 uM for Gly-L-Gln (at pH 7.5 and -120 mV)</KM>
        <KM evidence="6">118 uM for Gly-L-Gln (at pH 8.5 and -120 mV)</KM>
    </kinetics>
    <phDependence>
        <text evidence="6">Optimum pH is 7.5.</text>
    </phDependence>
</comment>
<comment type="subcellular location">
    <subcellularLocation>
        <location evidence="2">Apical cell membrane</location>
        <topology evidence="3">Multi-pass membrane protein</topology>
    </subcellularLocation>
    <subcellularLocation>
        <location evidence="1">Cytoplasmic vesicle</location>
        <location evidence="1">Phagosome membrane</location>
        <topology evidence="3">Multi-pass membrane protein</topology>
    </subcellularLocation>
    <subcellularLocation>
        <location evidence="9">Cell membrane</location>
        <topology evidence="3">Multi-pass membrane protein</topology>
    </subcellularLocation>
    <text evidence="1">Associated with the cell membrane in resting macrophages and enriched in phagocytic cups and phagosomes after particle internalization.</text>
</comment>
<comment type="alternative products">
    <event type="alternative splicing"/>
    <isoform>
        <id>B0S6T2-1</id>
        <name>1</name>
        <sequence type="displayed"/>
    </isoform>
    <isoform>
        <id>B0S6T2-2</id>
        <name>2</name>
        <sequence type="described" ref="VSP_059583"/>
    </isoform>
</comment>
<comment type="tissue specificity">
    <text evidence="6">Expressed in kidney, brain and gut. Also expressed weakly in eye, gill and skeletal muscle.</text>
</comment>
<comment type="developmental stage">
    <text evidence="6">Detected at 1 to 7 days post-fertilization (dpf). Expressed in the forebrain and midbrain at 1 dpf, where it localizes to the ependymal cell layer of the dicephalic ventricle and midbrain ventricle. Expressed in the developing otic vesicle at 2-7 dpf, where it shows particularly strong expression in the epithelium of the semicircular canal projections.</text>
</comment>
<comment type="similarity">
    <text evidence="8">Belongs to the major facilitator superfamily. Proton-dependent oligopeptide transporter (POT/PTR) (TC 2.A.17) family.</text>
</comment>